<reference key="1">
    <citation type="journal article" date="2007" name="Appl. Environ. Microbiol.">
        <title>Genome sequence of the cellulolytic gliding bacterium Cytophaga hutchinsonii.</title>
        <authorList>
            <person name="Xie G."/>
            <person name="Bruce D.C."/>
            <person name="Challacombe J.F."/>
            <person name="Chertkov O."/>
            <person name="Detter J.C."/>
            <person name="Gilna P."/>
            <person name="Han C.S."/>
            <person name="Lucas S."/>
            <person name="Misra M."/>
            <person name="Myers G.L."/>
            <person name="Richardson P."/>
            <person name="Tapia R."/>
            <person name="Thayer N."/>
            <person name="Thompson L.S."/>
            <person name="Brettin T.S."/>
            <person name="Henrissat B."/>
            <person name="Wilson D.B."/>
            <person name="McBride M.J."/>
        </authorList>
    </citation>
    <scope>NUCLEOTIDE SEQUENCE [LARGE SCALE GENOMIC DNA]</scope>
    <source>
        <strain>ATCC 33406 / DSM 1761 / JCM 20678 / CIP 103989 / IAM 12607 / NBRC 15051 / NCIMB 9469 / D465</strain>
    </source>
</reference>
<proteinExistence type="inferred from homology"/>
<comment type="function">
    <text evidence="1">Catalyzes the acyloin condensation reaction between C atoms 2 and 3 of pyruvate and glyceraldehyde 3-phosphate to yield 1-deoxy-D-xylulose-5-phosphate (DXP).</text>
</comment>
<comment type="catalytic activity">
    <reaction evidence="1">
        <text>D-glyceraldehyde 3-phosphate + pyruvate + H(+) = 1-deoxy-D-xylulose 5-phosphate + CO2</text>
        <dbReference type="Rhea" id="RHEA:12605"/>
        <dbReference type="ChEBI" id="CHEBI:15361"/>
        <dbReference type="ChEBI" id="CHEBI:15378"/>
        <dbReference type="ChEBI" id="CHEBI:16526"/>
        <dbReference type="ChEBI" id="CHEBI:57792"/>
        <dbReference type="ChEBI" id="CHEBI:59776"/>
        <dbReference type="EC" id="2.2.1.7"/>
    </reaction>
</comment>
<comment type="cofactor">
    <cofactor evidence="1">
        <name>Mg(2+)</name>
        <dbReference type="ChEBI" id="CHEBI:18420"/>
    </cofactor>
    <text evidence="1">Binds 1 Mg(2+) ion per subunit.</text>
</comment>
<comment type="cofactor">
    <cofactor evidence="1">
        <name>thiamine diphosphate</name>
        <dbReference type="ChEBI" id="CHEBI:58937"/>
    </cofactor>
    <text evidence="1">Binds 1 thiamine pyrophosphate per subunit.</text>
</comment>
<comment type="pathway">
    <text evidence="1">Metabolic intermediate biosynthesis; 1-deoxy-D-xylulose 5-phosphate biosynthesis; 1-deoxy-D-xylulose 5-phosphate from D-glyceraldehyde 3-phosphate and pyruvate: step 1/1.</text>
</comment>
<comment type="subunit">
    <text evidence="1">Homodimer.</text>
</comment>
<comment type="similarity">
    <text evidence="1">Belongs to the transketolase family. DXPS subfamily.</text>
</comment>
<organism>
    <name type="scientific">Cytophaga hutchinsonii (strain ATCC 33406 / DSM 1761 / CIP 103989 / NBRC 15051 / NCIMB 9469 / D465)</name>
    <dbReference type="NCBI Taxonomy" id="269798"/>
    <lineage>
        <taxon>Bacteria</taxon>
        <taxon>Pseudomonadati</taxon>
        <taxon>Bacteroidota</taxon>
        <taxon>Cytophagia</taxon>
        <taxon>Cytophagales</taxon>
        <taxon>Cytophagaceae</taxon>
        <taxon>Cytophaga</taxon>
    </lineage>
</organism>
<gene>
    <name evidence="1" type="primary">dxs</name>
    <name type="ordered locus">CHU_3643</name>
</gene>
<evidence type="ECO:0000255" key="1">
    <source>
        <dbReference type="HAMAP-Rule" id="MF_00315"/>
    </source>
</evidence>
<feature type="chain" id="PRO_0000256406" description="1-deoxy-D-xylulose-5-phosphate synthase">
    <location>
        <begin position="1"/>
        <end position="636"/>
    </location>
</feature>
<feature type="binding site" evidence="1">
    <location>
        <position position="77"/>
    </location>
    <ligand>
        <name>thiamine diphosphate</name>
        <dbReference type="ChEBI" id="CHEBI:58937"/>
    </ligand>
</feature>
<feature type="binding site" evidence="1">
    <location>
        <begin position="118"/>
        <end position="120"/>
    </location>
    <ligand>
        <name>thiamine diphosphate</name>
        <dbReference type="ChEBI" id="CHEBI:58937"/>
    </ligand>
</feature>
<feature type="binding site" evidence="1">
    <location>
        <position position="149"/>
    </location>
    <ligand>
        <name>Mg(2+)</name>
        <dbReference type="ChEBI" id="CHEBI:18420"/>
    </ligand>
</feature>
<feature type="binding site" evidence="1">
    <location>
        <begin position="150"/>
        <end position="151"/>
    </location>
    <ligand>
        <name>thiamine diphosphate</name>
        <dbReference type="ChEBI" id="CHEBI:58937"/>
    </ligand>
</feature>
<feature type="binding site" evidence="1">
    <location>
        <position position="178"/>
    </location>
    <ligand>
        <name>Mg(2+)</name>
        <dbReference type="ChEBI" id="CHEBI:18420"/>
    </ligand>
</feature>
<feature type="binding site" evidence="1">
    <location>
        <position position="178"/>
    </location>
    <ligand>
        <name>thiamine diphosphate</name>
        <dbReference type="ChEBI" id="CHEBI:58937"/>
    </ligand>
</feature>
<feature type="binding site" evidence="1">
    <location>
        <position position="290"/>
    </location>
    <ligand>
        <name>thiamine diphosphate</name>
        <dbReference type="ChEBI" id="CHEBI:58937"/>
    </ligand>
</feature>
<feature type="binding site" evidence="1">
    <location>
        <position position="375"/>
    </location>
    <ligand>
        <name>thiamine diphosphate</name>
        <dbReference type="ChEBI" id="CHEBI:58937"/>
    </ligand>
</feature>
<sequence>MIQPGELLRTIHSPEELRKLDETQLIQVSEELRQFIVDNVSVYGGHFAASLGVVELTVALHYVFNTPVDQLVWDVGHQAYGHKILTGRMENFHTNRTYNGLSGFPKRSESPYDTFGVGHSSTSISAALGMAVASQYQKDNRQHIAVIGDGALTGGMAFEAMNHAGVTNSNLLIVLNDNCMAIDPNVGALKDYLVDITTSRTYNRVRDEVWNMLGKISKFGPNAQAIASKVESGLKASLLKQSNLFESLHIRYFGPVDGHDLNHLVQVLNDLKDIPGPKILHTLTVKGKGYALAEKDQVKWHAPGKFDKVTGQIHVKTYDTPQAPKYQDVFGNTIIELAEKNDKIMGITPAMPSGCSLNLMMEKMPDRAFDVGIAEQHAVTFSAGLATQGLIPFCNIYSTFMQRAYDQVIHDVCIQNLHVIFCLDRAGFAGVDGPTHHGAYDLAFFRCIPNLVVSAPMNEQELRNLMYTAQLQKNKGPFSIRYPRGQGVMPNWKTPFEEITIGKGRKVSDGDDVAILSIGHIGNYVIEAKALLREEELSPAHFDMRFVKPIDEEMLHLVFKKFKKIITVEDGCLMGGFGSAVLEFMADNNYAAQVIRLGIPDRIVEHGEQAELHKECGFDPQSIARTVRNLSGVVLK</sequence>
<protein>
    <recommendedName>
        <fullName evidence="1">1-deoxy-D-xylulose-5-phosphate synthase</fullName>
        <ecNumber evidence="1">2.2.1.7</ecNumber>
    </recommendedName>
    <alternativeName>
        <fullName evidence="1">1-deoxyxylulose-5-phosphate synthase</fullName>
        <shortName evidence="1">DXP synthase</shortName>
        <shortName evidence="1">DXPS</shortName>
    </alternativeName>
</protein>
<name>DXS_CYTH3</name>
<dbReference type="EC" id="2.2.1.7" evidence="1"/>
<dbReference type="EMBL" id="CP000383">
    <property type="protein sequence ID" value="ABG60876.1"/>
    <property type="molecule type" value="Genomic_DNA"/>
</dbReference>
<dbReference type="RefSeq" id="WP_011586981.1">
    <property type="nucleotide sequence ID" value="NC_008255.1"/>
</dbReference>
<dbReference type="SMR" id="Q11NY7"/>
<dbReference type="STRING" id="269798.CHU_3643"/>
<dbReference type="KEGG" id="chu:CHU_3643"/>
<dbReference type="eggNOG" id="COG1154">
    <property type="taxonomic scope" value="Bacteria"/>
</dbReference>
<dbReference type="HOGENOM" id="CLU_009227_1_4_10"/>
<dbReference type="OrthoDB" id="9803371at2"/>
<dbReference type="UniPathway" id="UPA00064">
    <property type="reaction ID" value="UER00091"/>
</dbReference>
<dbReference type="Proteomes" id="UP000001822">
    <property type="component" value="Chromosome"/>
</dbReference>
<dbReference type="GO" id="GO:0005829">
    <property type="term" value="C:cytosol"/>
    <property type="evidence" value="ECO:0007669"/>
    <property type="project" value="TreeGrafter"/>
</dbReference>
<dbReference type="GO" id="GO:0008661">
    <property type="term" value="F:1-deoxy-D-xylulose-5-phosphate synthase activity"/>
    <property type="evidence" value="ECO:0007669"/>
    <property type="project" value="UniProtKB-UniRule"/>
</dbReference>
<dbReference type="GO" id="GO:0000287">
    <property type="term" value="F:magnesium ion binding"/>
    <property type="evidence" value="ECO:0007669"/>
    <property type="project" value="UniProtKB-UniRule"/>
</dbReference>
<dbReference type="GO" id="GO:0030976">
    <property type="term" value="F:thiamine pyrophosphate binding"/>
    <property type="evidence" value="ECO:0007669"/>
    <property type="project" value="UniProtKB-UniRule"/>
</dbReference>
<dbReference type="GO" id="GO:0052865">
    <property type="term" value="P:1-deoxy-D-xylulose 5-phosphate biosynthetic process"/>
    <property type="evidence" value="ECO:0007669"/>
    <property type="project" value="UniProtKB-UniPathway"/>
</dbReference>
<dbReference type="GO" id="GO:0019288">
    <property type="term" value="P:isopentenyl diphosphate biosynthetic process, methylerythritol 4-phosphate pathway"/>
    <property type="evidence" value="ECO:0007669"/>
    <property type="project" value="TreeGrafter"/>
</dbReference>
<dbReference type="GO" id="GO:0016114">
    <property type="term" value="P:terpenoid biosynthetic process"/>
    <property type="evidence" value="ECO:0007669"/>
    <property type="project" value="UniProtKB-UniRule"/>
</dbReference>
<dbReference type="GO" id="GO:0009228">
    <property type="term" value="P:thiamine biosynthetic process"/>
    <property type="evidence" value="ECO:0007669"/>
    <property type="project" value="UniProtKB-UniRule"/>
</dbReference>
<dbReference type="CDD" id="cd02007">
    <property type="entry name" value="TPP_DXS"/>
    <property type="match status" value="1"/>
</dbReference>
<dbReference type="CDD" id="cd07033">
    <property type="entry name" value="TPP_PYR_DXS_TK_like"/>
    <property type="match status" value="1"/>
</dbReference>
<dbReference type="FunFam" id="3.40.50.920:FF:000002">
    <property type="entry name" value="1-deoxy-D-xylulose-5-phosphate synthase"/>
    <property type="match status" value="1"/>
</dbReference>
<dbReference type="FunFam" id="3.40.50.970:FF:000005">
    <property type="entry name" value="1-deoxy-D-xylulose-5-phosphate synthase"/>
    <property type="match status" value="1"/>
</dbReference>
<dbReference type="Gene3D" id="3.40.50.920">
    <property type="match status" value="1"/>
</dbReference>
<dbReference type="Gene3D" id="3.40.50.970">
    <property type="match status" value="2"/>
</dbReference>
<dbReference type="HAMAP" id="MF_00315">
    <property type="entry name" value="DXP_synth"/>
    <property type="match status" value="1"/>
</dbReference>
<dbReference type="InterPro" id="IPR005477">
    <property type="entry name" value="Dxylulose-5-P_synthase"/>
</dbReference>
<dbReference type="InterPro" id="IPR029061">
    <property type="entry name" value="THDP-binding"/>
</dbReference>
<dbReference type="InterPro" id="IPR009014">
    <property type="entry name" value="Transketo_C/PFOR_II"/>
</dbReference>
<dbReference type="InterPro" id="IPR005475">
    <property type="entry name" value="Transketolase-like_Pyr-bd"/>
</dbReference>
<dbReference type="InterPro" id="IPR020826">
    <property type="entry name" value="Transketolase_BS"/>
</dbReference>
<dbReference type="InterPro" id="IPR033248">
    <property type="entry name" value="Transketolase_C"/>
</dbReference>
<dbReference type="InterPro" id="IPR049557">
    <property type="entry name" value="Transketolase_CS"/>
</dbReference>
<dbReference type="NCBIfam" id="TIGR00204">
    <property type="entry name" value="dxs"/>
    <property type="match status" value="1"/>
</dbReference>
<dbReference type="NCBIfam" id="NF003933">
    <property type="entry name" value="PRK05444.2-2"/>
    <property type="match status" value="1"/>
</dbReference>
<dbReference type="PANTHER" id="PTHR43322">
    <property type="entry name" value="1-D-DEOXYXYLULOSE 5-PHOSPHATE SYNTHASE-RELATED"/>
    <property type="match status" value="1"/>
</dbReference>
<dbReference type="PANTHER" id="PTHR43322:SF5">
    <property type="entry name" value="1-DEOXY-D-XYLULOSE-5-PHOSPHATE SYNTHASE, CHLOROPLASTIC"/>
    <property type="match status" value="1"/>
</dbReference>
<dbReference type="Pfam" id="PF13292">
    <property type="entry name" value="DXP_synthase_N"/>
    <property type="match status" value="1"/>
</dbReference>
<dbReference type="Pfam" id="PF02779">
    <property type="entry name" value="Transket_pyr"/>
    <property type="match status" value="1"/>
</dbReference>
<dbReference type="Pfam" id="PF02780">
    <property type="entry name" value="Transketolase_C"/>
    <property type="match status" value="1"/>
</dbReference>
<dbReference type="SMART" id="SM00861">
    <property type="entry name" value="Transket_pyr"/>
    <property type="match status" value="1"/>
</dbReference>
<dbReference type="SUPFAM" id="SSF52518">
    <property type="entry name" value="Thiamin diphosphate-binding fold (THDP-binding)"/>
    <property type="match status" value="2"/>
</dbReference>
<dbReference type="SUPFAM" id="SSF52922">
    <property type="entry name" value="TK C-terminal domain-like"/>
    <property type="match status" value="1"/>
</dbReference>
<dbReference type="PROSITE" id="PS00801">
    <property type="entry name" value="TRANSKETOLASE_1"/>
    <property type="match status" value="1"/>
</dbReference>
<dbReference type="PROSITE" id="PS00802">
    <property type="entry name" value="TRANSKETOLASE_2"/>
    <property type="match status" value="1"/>
</dbReference>
<accession>Q11NY7</accession>
<keyword id="KW-0414">Isoprene biosynthesis</keyword>
<keyword id="KW-0460">Magnesium</keyword>
<keyword id="KW-0479">Metal-binding</keyword>
<keyword id="KW-1185">Reference proteome</keyword>
<keyword id="KW-0784">Thiamine biosynthesis</keyword>
<keyword id="KW-0786">Thiamine pyrophosphate</keyword>
<keyword id="KW-0808">Transferase</keyword>